<keyword id="KW-0002">3D-structure</keyword>
<keyword id="KW-0903">Direct protein sequencing</keyword>
<keyword id="KW-0479">Metal-binding</keyword>
<keyword id="KW-0500">Molybdenum</keyword>
<keyword id="KW-0560">Oxidoreductase</keyword>
<keyword id="KW-0574">Periplasm</keyword>
<keyword id="KW-0732">Signal</keyword>
<evidence type="ECO:0000255" key="1">
    <source>
        <dbReference type="PROSITE-ProRule" id="PRU00648"/>
    </source>
</evidence>
<evidence type="ECO:0000269" key="2">
    <source>
    </source>
</evidence>
<evidence type="ECO:0000269" key="3">
    <source>
    </source>
</evidence>
<evidence type="ECO:0000269" key="4">
    <source>
    </source>
</evidence>
<evidence type="ECO:0000269" key="5">
    <source>
    </source>
</evidence>
<evidence type="ECO:0000269" key="6">
    <source>
    </source>
</evidence>
<evidence type="ECO:0000269" key="7">
    <source>
    </source>
</evidence>
<evidence type="ECO:0000269" key="8">
    <source>
    </source>
</evidence>
<evidence type="ECO:0000269" key="9">
    <source>
    </source>
</evidence>
<evidence type="ECO:0000269" key="10">
    <source ref="6"/>
</evidence>
<evidence type="ECO:0000305" key="11"/>
<evidence type="ECO:0007829" key="12">
    <source>
        <dbReference type="PDB" id="1DMR"/>
    </source>
</evidence>
<evidence type="ECO:0007829" key="13">
    <source>
        <dbReference type="PDB" id="1E60"/>
    </source>
</evidence>
<evidence type="ECO:0007829" key="14">
    <source>
        <dbReference type="PDB" id="4DMR"/>
    </source>
</evidence>
<gene>
    <name type="primary">dorA</name>
</gene>
<protein>
    <recommendedName>
        <fullName>Dimethyl sulfoxide/trimethylamine N-oxide reductase</fullName>
        <shortName>DMSO reductase</shortName>
        <shortName>DMSOR</shortName>
        <shortName>Me2SO reductase</shortName>
        <shortName>TMAOR</shortName>
        <ecNumber>1.7.2.3</ecNumber>
        <ecNumber>1.8.5.3</ecNumber>
    </recommendedName>
</protein>
<dbReference type="EC" id="1.7.2.3"/>
<dbReference type="EC" id="1.8.5.3"/>
<dbReference type="EMBL" id="U49506">
    <property type="protein sequence ID" value="AAD13674.1"/>
    <property type="molecule type" value="Genomic_DNA"/>
</dbReference>
<dbReference type="EMBL" id="X95407">
    <property type="protein sequence ID" value="CAA64689.1"/>
    <property type="status" value="ALT_INIT"/>
    <property type="molecule type" value="Genomic_DNA"/>
</dbReference>
<dbReference type="PDB" id="1DMR">
    <property type="method" value="X-ray"/>
    <property type="resolution" value="1.82 A"/>
    <property type="chains" value="A=1-823"/>
</dbReference>
<dbReference type="PDB" id="1DMS">
    <property type="method" value="X-ray"/>
    <property type="resolution" value="1.88 A"/>
    <property type="chains" value="A=43-823"/>
</dbReference>
<dbReference type="PDB" id="1E18">
    <property type="method" value="X-ray"/>
    <property type="resolution" value="2.00 A"/>
    <property type="chains" value="A=1-823"/>
</dbReference>
<dbReference type="PDB" id="1E5V">
    <property type="method" value="X-ray"/>
    <property type="resolution" value="2.40 A"/>
    <property type="chains" value="A/C=1-823"/>
</dbReference>
<dbReference type="PDB" id="1E60">
    <property type="method" value="X-ray"/>
    <property type="resolution" value="2.00 A"/>
    <property type="chains" value="A/C=1-823"/>
</dbReference>
<dbReference type="PDB" id="1E61">
    <property type="method" value="X-ray"/>
    <property type="resolution" value="1.90 A"/>
    <property type="chains" value="A/C=1-823"/>
</dbReference>
<dbReference type="PDB" id="1H5N">
    <property type="method" value="X-ray"/>
    <property type="resolution" value="2.00 A"/>
    <property type="chains" value="A/C=1-823"/>
</dbReference>
<dbReference type="PDB" id="2DMR">
    <property type="method" value="X-ray"/>
    <property type="resolution" value="2.80 A"/>
    <property type="chains" value="A=1-823"/>
</dbReference>
<dbReference type="PDB" id="3DMR">
    <property type="method" value="X-ray"/>
    <property type="resolution" value="2.50 A"/>
    <property type="chains" value="A=1-823"/>
</dbReference>
<dbReference type="PDB" id="4DMR">
    <property type="method" value="X-ray"/>
    <property type="resolution" value="1.90 A"/>
    <property type="chains" value="A=1-823"/>
</dbReference>
<dbReference type="PDBsum" id="1DMR"/>
<dbReference type="PDBsum" id="1DMS"/>
<dbReference type="PDBsum" id="1E18"/>
<dbReference type="PDBsum" id="1E5V"/>
<dbReference type="PDBsum" id="1E60"/>
<dbReference type="PDBsum" id="1E61"/>
<dbReference type="PDBsum" id="1H5N"/>
<dbReference type="PDBsum" id="2DMR"/>
<dbReference type="PDBsum" id="3DMR"/>
<dbReference type="PDBsum" id="4DMR"/>
<dbReference type="SMR" id="Q52675"/>
<dbReference type="BRENDA" id="1.8.5.3">
    <property type="organism ID" value="5381"/>
</dbReference>
<dbReference type="EvolutionaryTrace" id="Q52675"/>
<dbReference type="GO" id="GO:0030288">
    <property type="term" value="C:outer membrane-bounded periplasmic space"/>
    <property type="evidence" value="ECO:0007669"/>
    <property type="project" value="TreeGrafter"/>
</dbReference>
<dbReference type="GO" id="GO:0009055">
    <property type="term" value="F:electron transfer activity"/>
    <property type="evidence" value="ECO:0007669"/>
    <property type="project" value="TreeGrafter"/>
</dbReference>
<dbReference type="GO" id="GO:0030151">
    <property type="term" value="F:molybdenum ion binding"/>
    <property type="evidence" value="ECO:0007669"/>
    <property type="project" value="TreeGrafter"/>
</dbReference>
<dbReference type="GO" id="GO:0043546">
    <property type="term" value="F:molybdopterin cofactor binding"/>
    <property type="evidence" value="ECO:0007669"/>
    <property type="project" value="InterPro"/>
</dbReference>
<dbReference type="GO" id="GO:0050626">
    <property type="term" value="F:trimethylamine-N-oxide reductase (cytochrome c) activity"/>
    <property type="evidence" value="ECO:0007669"/>
    <property type="project" value="UniProtKB-EC"/>
</dbReference>
<dbReference type="GO" id="GO:0009061">
    <property type="term" value="P:anaerobic respiration"/>
    <property type="evidence" value="ECO:0007669"/>
    <property type="project" value="TreeGrafter"/>
</dbReference>
<dbReference type="CDD" id="cd02793">
    <property type="entry name" value="MopB_CT_DMSOR-BSOR-TMAOR"/>
    <property type="match status" value="1"/>
</dbReference>
<dbReference type="CDD" id="cd02769">
    <property type="entry name" value="MopB_DMSOR-BSOR-TMAOR"/>
    <property type="match status" value="1"/>
</dbReference>
<dbReference type="FunFam" id="2.40.40.20:FF:000009">
    <property type="entry name" value="Biotin sulfoxide reductase 2"/>
    <property type="match status" value="1"/>
</dbReference>
<dbReference type="FunFam" id="3.40.228.10:FF:000003">
    <property type="entry name" value="Biotin sulfoxide reductase 2"/>
    <property type="match status" value="1"/>
</dbReference>
<dbReference type="Gene3D" id="2.40.40.20">
    <property type="match status" value="1"/>
</dbReference>
<dbReference type="Gene3D" id="3.40.50.740">
    <property type="match status" value="1"/>
</dbReference>
<dbReference type="Gene3D" id="3.40.228.10">
    <property type="entry name" value="Dimethylsulfoxide Reductase, domain 2"/>
    <property type="match status" value="1"/>
</dbReference>
<dbReference type="Gene3D" id="3.90.55.10">
    <property type="entry name" value="Dimethylsulfoxide Reductase, domain 3"/>
    <property type="match status" value="1"/>
</dbReference>
<dbReference type="InterPro" id="IPR009010">
    <property type="entry name" value="Asp_de-COase-like_dom_sf"/>
</dbReference>
<dbReference type="InterPro" id="IPR006658">
    <property type="entry name" value="BisC"/>
</dbReference>
<dbReference type="InterPro" id="IPR041954">
    <property type="entry name" value="CT_DMSOR/BSOR/TMAOR"/>
</dbReference>
<dbReference type="InterPro" id="IPR041460">
    <property type="entry name" value="Molybdopterin_N"/>
</dbReference>
<dbReference type="InterPro" id="IPR006657">
    <property type="entry name" value="MoPterin_dinucl-bd_dom"/>
</dbReference>
<dbReference type="InterPro" id="IPR006656">
    <property type="entry name" value="Mopterin_OxRdtase"/>
</dbReference>
<dbReference type="InterPro" id="IPR006655">
    <property type="entry name" value="Mopterin_OxRdtase_prok_CS"/>
</dbReference>
<dbReference type="InterPro" id="IPR050612">
    <property type="entry name" value="Prok_Mopterin_Oxidored"/>
</dbReference>
<dbReference type="InterPro" id="IPR006311">
    <property type="entry name" value="TAT_signal"/>
</dbReference>
<dbReference type="NCBIfam" id="TIGR00509">
    <property type="entry name" value="bisC_fam"/>
    <property type="match status" value="1"/>
</dbReference>
<dbReference type="NCBIfam" id="NF011682">
    <property type="entry name" value="PRK15102.1"/>
    <property type="match status" value="1"/>
</dbReference>
<dbReference type="PANTHER" id="PTHR43742">
    <property type="entry name" value="TRIMETHYLAMINE-N-OXIDE REDUCTASE"/>
    <property type="match status" value="1"/>
</dbReference>
<dbReference type="PANTHER" id="PTHR43742:SF10">
    <property type="entry name" value="TRIMETHYLAMINE-N-OXIDE REDUCTASE 2"/>
    <property type="match status" value="1"/>
</dbReference>
<dbReference type="Pfam" id="PF00384">
    <property type="entry name" value="Molybdopterin"/>
    <property type="match status" value="1"/>
</dbReference>
<dbReference type="Pfam" id="PF18364">
    <property type="entry name" value="Molybdopterin_N"/>
    <property type="match status" value="1"/>
</dbReference>
<dbReference type="Pfam" id="PF01568">
    <property type="entry name" value="Molydop_binding"/>
    <property type="match status" value="1"/>
</dbReference>
<dbReference type="SUPFAM" id="SSF50692">
    <property type="entry name" value="ADC-like"/>
    <property type="match status" value="1"/>
</dbReference>
<dbReference type="SUPFAM" id="SSF53706">
    <property type="entry name" value="Formate dehydrogenase/DMSO reductase, domains 1-3"/>
    <property type="match status" value="1"/>
</dbReference>
<dbReference type="PROSITE" id="PS00490">
    <property type="entry name" value="MOLYBDOPTERIN_PROK_2"/>
    <property type="match status" value="1"/>
</dbReference>
<dbReference type="PROSITE" id="PS00932">
    <property type="entry name" value="MOLYBDOPTERIN_PROK_3"/>
    <property type="match status" value="1"/>
</dbReference>
<dbReference type="PROSITE" id="PS51318">
    <property type="entry name" value="TAT"/>
    <property type="match status" value="1"/>
</dbReference>
<proteinExistence type="evidence at protein level"/>
<reference key="1">
    <citation type="journal article" date="1996" name="Biochim. Biophys. Acta">
        <title>Cloning and sequence analysis of the dimethylsulfoxide reductase structural gene from Rhodobacter capsulatus.</title>
        <authorList>
            <person name="Shaw A.L."/>
            <person name="Hanson G.R."/>
            <person name="McEwan A.G."/>
        </authorList>
    </citation>
    <scope>NUCLEOTIDE SEQUENCE [GENOMIC DNA]</scope>
    <scope>PROTEIN SEQUENCE OF 43-59</scope>
    <scope>FUNCTION AS A DIMETHYL SULFOXIDE REDUCTASE AND TRIMETHYLAMINE N-OXIDE REDUCTASE</scope>
    <scope>SUBCELLULAR LOCATION</scope>
    <scope>SUBUNIT</scope>
    <source>
        <strain>DSM 938 / 37b4</strain>
    </source>
</reference>
<reference key="2">
    <citation type="submission" date="1998-03" db="EMBL/GenBank/DDBJ databases">
        <authorList>
            <person name="Shaw A.L."/>
            <person name="McEwan A.G."/>
        </authorList>
    </citation>
    <scope>SEQUENCE REVISION</scope>
</reference>
<reference key="3">
    <citation type="journal article" date="1996" name="J. Mol. Biol.">
        <title>Isolation, cloning, sequence analysis and localization of the operon encoding dimethyl sulfoxide/trimethylamine N-oxide reductase from Rhodobacter capsulatus.</title>
        <authorList>
            <person name="Knaeblein J."/>
            <person name="Mann K."/>
            <person name="Ehlert S."/>
            <person name="Fonstein M."/>
            <person name="Huber R."/>
            <person name="Schneider F."/>
        </authorList>
    </citation>
    <scope>NUCLEOTIDE SEQUENCE [GENOMIC DNA]</scope>
    <scope>PROTEIN SEQUENCE OF 43-71</scope>
    <scope>MASS SPECTROMETRY</scope>
    <source>
        <strain>DSM 938 / 37b4</strain>
    </source>
</reference>
<reference key="4">
    <citation type="journal article" date="1991" name="Biochem. J.">
        <title>Purification and properties of dimethyl sulphoxide reductase from Rhodobacter capsulatus. A periplasmic molybdoenzyme.</title>
        <authorList>
            <person name="McEwan A.G."/>
            <person name="Ferguson S.J."/>
            <person name="Jackson J.B."/>
        </authorList>
    </citation>
    <scope>FUNCTION AS A DIMETHYL SULFOXIDE REDUCTASE AND TRIMETHYLAMINE N-OXIDE REDUCTASE</scope>
    <scope>COFACTOR</scope>
    <scope>SUBUNIT</scope>
    <source>
        <strain>DSM 938 / 37b4</strain>
    </source>
</reference>
<reference key="5">
    <citation type="journal article" date="1996" name="J. Mol. Biol.">
        <title>Crystal structure of dimethyl sulfoxide reductase from Rhodobacter capsulatus at 1.88-A resolution.</title>
        <authorList>
            <person name="Schneider F."/>
            <person name="Loewe J."/>
            <person name="Huber R."/>
            <person name="Schindelin H."/>
            <person name="Kisker C."/>
            <person name="Knaeblein J."/>
        </authorList>
    </citation>
    <scope>X-RAY CRYSTALLOGRAPHY (1.88 ANGSTROMS) OF 43-823 IN COMPLEX WITH MOLYBDOPTERIN</scope>
    <scope>COFACTOR</scope>
</reference>
<reference key="6">
    <citation type="journal article" date="1997" name="J. Biol. Inorg. Chem.">
        <title>Molybdenum active centre of DMSO reductase from Rhodobacter capsulatus: crystal structure of the oxidised enzyme at 1.82-A resolution and the dithionite-reduced enzyme at 2.8-A resolution.</title>
        <authorList>
            <person name="McAlpine A.S."/>
            <person name="McEwan A.G."/>
            <person name="Shaw A.L."/>
            <person name="Bailey S."/>
        </authorList>
    </citation>
    <scope>X-RAY CRYSTALLOGRAPHY (2.80 ANGSTROMS) IN COMPLEX WITH MOLYBDOPTERIN</scope>
    <source>
        <strain>H123</strain>
    </source>
</reference>
<reference key="7">
    <citation type="journal article" date="1998" name="J. Mol. Biol.">
        <title>The high resolution crystal structure of DMSO reductase in complex with DMSO.</title>
        <authorList>
            <person name="McAlpine A.S."/>
            <person name="McEwan A.G."/>
            <person name="Bailey S."/>
        </authorList>
    </citation>
    <scope>X-RAY CRYSTALLOGRAPHY (1.90 ANGSTROMS) IN COMPLEX WITH MOLYBDOPTERIN</scope>
</reference>
<reference key="8">
    <citation type="journal article" date="2000" name="Biochemistry">
        <title>Reversible dissociation of thiolate ligands from molybdenum in an enzyme of the dimethyl sulfoxide reductase family.</title>
        <authorList>
            <person name="Bray R.C."/>
            <person name="Adams B."/>
            <person name="Smith A.T."/>
            <person name="Bennett B."/>
            <person name="Bailey S."/>
        </authorList>
    </citation>
    <scope>X-RAY CRYSTALLOGRAPHY (1.90 ANGSTROMS) IN COMPLEX WITH MOLYBDOPTERIN</scope>
    <scope>SUBUNIT</scope>
</reference>
<reference key="9">
    <citation type="journal article" date="2000" name="J. Mol. Biol.">
        <title>Dimethylsulfoxide reductase: an enzyme capable of catalysis with either molybdenum or tungsten at the active site.</title>
        <authorList>
            <person name="Stewart L.J."/>
            <person name="Bailey S."/>
            <person name="Bennett B."/>
            <person name="Charnock J.M."/>
            <person name="Garner C.D."/>
            <person name="McAlpine A.S."/>
        </authorList>
    </citation>
    <scope>X-RAY CRYSTALLOGRAPHY (2.00 ANGSTROMS) IN COMPLEX WITH MOLYBDOPTERIN</scope>
</reference>
<reference key="10">
    <citation type="journal article" date="2001" name="Biochemistry">
        <title>Reactions of dimethylsulfoxide reductase in the presence of dimethyl sulfide and the structure of the dimethyl sulfide-modified enzyme.</title>
        <authorList>
            <person name="Bray R.C."/>
            <person name="Adams B."/>
            <person name="Smith A.T."/>
            <person name="Richards R.L."/>
            <person name="Lowe D.J."/>
            <person name="Bailey S."/>
        </authorList>
    </citation>
    <scope>X-RAY CRYSTALLOGRAPHY (2.00 ANGSTROMS) IN COMPLEX WITH MOLYBDOPTERIN</scope>
    <scope>SUBUNIT</scope>
</reference>
<organism>
    <name type="scientific">Rhodobacter capsulatus</name>
    <name type="common">Rhodopseudomonas capsulata</name>
    <dbReference type="NCBI Taxonomy" id="1061"/>
    <lineage>
        <taxon>Bacteria</taxon>
        <taxon>Pseudomonadati</taxon>
        <taxon>Pseudomonadota</taxon>
        <taxon>Alphaproteobacteria</taxon>
        <taxon>Rhodobacterales</taxon>
        <taxon>Rhodobacter group</taxon>
        <taxon>Rhodobacter</taxon>
    </lineage>
</organism>
<accession>Q52675</accession>
<accession>P72249</accession>
<name>DSTOR_RHOCA</name>
<feature type="signal peptide" description="Tat-type signal" evidence="1 6 7">
    <location>
        <begin position="1"/>
        <end position="42"/>
    </location>
</feature>
<feature type="chain" id="PRO_0000019145" description="Dimethyl sulfoxide/trimethylamine N-oxide reductase">
    <location>
        <begin position="43"/>
        <end position="823"/>
    </location>
</feature>
<feature type="binding site">
    <location>
        <begin position="156"/>
        <end position="160"/>
    </location>
    <ligand>
        <name>Mo-bis(molybdopterin guanine dinucleotide)</name>
        <dbReference type="ChEBI" id="CHEBI:60539"/>
    </ligand>
</feature>
<feature type="binding site" evidence="2 3 4 8 9 10">
    <location>
        <position position="158"/>
    </location>
    <ligand>
        <name>Mo-bis(molybdopterin guanine dinucleotide)</name>
        <dbReference type="ChEBI" id="CHEBI:60539"/>
    </ligand>
</feature>
<feature type="binding site">
    <location>
        <position position="189"/>
    </location>
    <ligand>
        <name>Mo-bis(molybdopterin guanine dinucleotide)</name>
        <dbReference type="ChEBI" id="CHEBI:60539"/>
    </ligand>
    <ligandPart>
        <name>Mo</name>
        <dbReference type="ChEBI" id="CHEBI:28685"/>
    </ligandPart>
</feature>
<feature type="binding site">
    <location>
        <begin position="232"/>
        <end position="233"/>
    </location>
    <ligand>
        <name>Mo-bis(molybdopterin guanine dinucleotide)</name>
        <dbReference type="ChEBI" id="CHEBI:60539"/>
    </ligand>
</feature>
<feature type="binding site">
    <location>
        <begin position="262"/>
        <end position="263"/>
    </location>
    <ligand>
        <name>Mo-bis(molybdopterin guanine dinucleotide)</name>
        <dbReference type="ChEBI" id="CHEBI:60539"/>
    </ligand>
</feature>
<feature type="binding site">
    <location>
        <begin position="283"/>
        <end position="285"/>
    </location>
    <ligand>
        <name>Mo-bis(molybdopterin guanine dinucleotide)</name>
        <dbReference type="ChEBI" id="CHEBI:60539"/>
    </ligand>
</feature>
<feature type="binding site">
    <location>
        <begin position="364"/>
        <end position="365"/>
    </location>
    <ligand>
        <name>Mo-bis(molybdopterin guanine dinucleotide)</name>
        <dbReference type="ChEBI" id="CHEBI:60539"/>
    </ligand>
</feature>
<feature type="binding site" evidence="2 3 4 8 9 10">
    <location>
        <position position="368"/>
    </location>
    <ligand>
        <name>Mo-bis(molybdopterin guanine dinucleotide)</name>
        <dbReference type="ChEBI" id="CHEBI:60539"/>
    </ligand>
</feature>
<feature type="binding site" evidence="2 3 4 8 9 10">
    <location>
        <position position="476"/>
    </location>
    <ligand>
        <name>Mo-bis(molybdopterin guanine dinucleotide)</name>
        <dbReference type="ChEBI" id="CHEBI:60539"/>
    </ligand>
</feature>
<feature type="binding site" evidence="2 3 4 8 9 10">
    <location>
        <position position="480"/>
    </location>
    <ligand>
        <name>Mo-bis(molybdopterin guanine dinucleotide)</name>
        <dbReference type="ChEBI" id="CHEBI:60539"/>
    </ligand>
</feature>
<feature type="binding site">
    <location>
        <begin position="500"/>
        <end position="501"/>
    </location>
    <ligand>
        <name>Mo-bis(molybdopterin guanine dinucleotide)</name>
        <dbReference type="ChEBI" id="CHEBI:60539"/>
    </ligand>
</feature>
<feature type="binding site" evidence="2 3 4 8 9 10">
    <location>
        <position position="523"/>
    </location>
    <ligand>
        <name>Mo-bis(molybdopterin guanine dinucleotide)</name>
        <dbReference type="ChEBI" id="CHEBI:60539"/>
    </ligand>
</feature>
<feature type="binding site" evidence="2 3 4 8 9 10">
    <location>
        <position position="553"/>
    </location>
    <ligand>
        <name>Mo-bis(molybdopterin guanine dinucleotide)</name>
        <dbReference type="ChEBI" id="CHEBI:60539"/>
    </ligand>
</feature>
<feature type="binding site">
    <location>
        <begin position="685"/>
        <end position="686"/>
    </location>
    <ligand>
        <name>Mo-bis(molybdopterin guanine dinucleotide)</name>
        <dbReference type="ChEBI" id="CHEBI:60539"/>
    </ligand>
</feature>
<feature type="binding site">
    <location>
        <begin position="691"/>
        <end position="693"/>
    </location>
    <ligand>
        <name>Mo-bis(molybdopterin guanine dinucleotide)</name>
        <dbReference type="ChEBI" id="CHEBI:60539"/>
    </ligand>
</feature>
<feature type="binding site" evidence="2 3 4 8 9 10">
    <location>
        <position position="779"/>
    </location>
    <ligand>
        <name>Mo-bis(molybdopterin guanine dinucleotide)</name>
        <dbReference type="ChEBI" id="CHEBI:60539"/>
    </ligand>
</feature>
<feature type="binding site">
    <location>
        <begin position="796"/>
        <end position="797"/>
    </location>
    <ligand>
        <name>Mo-bis(molybdopterin guanine dinucleotide)</name>
        <dbReference type="ChEBI" id="CHEBI:60539"/>
    </ligand>
</feature>
<feature type="sequence conflict" description="In Ref. 3; CAA64689." evidence="11" ref="3">
    <original>R</original>
    <variation>P</variation>
    <location>
        <position position="33"/>
    </location>
</feature>
<feature type="sequence conflict" description="In Ref. 3; CAA64689." evidence="11" ref="3">
    <original>I</original>
    <variation>K</variation>
    <location>
        <position position="354"/>
    </location>
</feature>
<feature type="sequence conflict" description="In Ref. 3; CAA64689." evidence="11" ref="3">
    <original>T</original>
    <variation>S</variation>
    <location>
        <position position="410"/>
    </location>
</feature>
<feature type="sequence conflict" description="In Ref. 3; CAA64689." evidence="11" ref="3">
    <original>P</original>
    <variation>A</variation>
    <location>
        <position position="769"/>
    </location>
</feature>
<feature type="strand" evidence="12">
    <location>
        <begin position="48"/>
        <end position="54"/>
    </location>
</feature>
<feature type="strand" evidence="12">
    <location>
        <begin position="57"/>
        <end position="64"/>
    </location>
</feature>
<feature type="strand" evidence="12">
    <location>
        <begin position="67"/>
        <end position="73"/>
    </location>
</feature>
<feature type="helix" evidence="12">
    <location>
        <begin position="84"/>
        <end position="92"/>
    </location>
</feature>
<feature type="strand" evidence="12">
    <location>
        <begin position="101"/>
        <end position="103"/>
    </location>
</feature>
<feature type="helix" evidence="12">
    <location>
        <begin position="104"/>
        <end position="109"/>
    </location>
</feature>
<feature type="helix" evidence="12">
    <location>
        <begin position="110"/>
        <end position="112"/>
    </location>
</feature>
<feature type="helix" evidence="12">
    <location>
        <begin position="115"/>
        <end position="117"/>
    </location>
</feature>
<feature type="strand" evidence="12">
    <location>
        <begin position="123"/>
        <end position="125"/>
    </location>
</feature>
<feature type="helix" evidence="12">
    <location>
        <begin position="128"/>
        <end position="146"/>
    </location>
</feature>
<feature type="helix" evidence="12">
    <location>
        <begin position="148"/>
        <end position="150"/>
    </location>
</feature>
<feature type="helix" evidence="12">
    <location>
        <begin position="167"/>
        <end position="178"/>
    </location>
</feature>
<feature type="strand" evidence="12">
    <location>
        <begin position="182"/>
        <end position="186"/>
    </location>
</feature>
<feature type="strand" evidence="12">
    <location>
        <begin position="188"/>
        <end position="190"/>
    </location>
</feature>
<feature type="helix" evidence="12">
    <location>
        <begin position="193"/>
        <end position="200"/>
    </location>
</feature>
<feature type="strand" evidence="12">
    <location>
        <begin position="201"/>
        <end position="203"/>
    </location>
</feature>
<feature type="helix" evidence="12">
    <location>
        <begin position="213"/>
        <end position="219"/>
    </location>
</feature>
<feature type="strand" evidence="12">
    <location>
        <begin position="221"/>
        <end position="227"/>
    </location>
</feature>
<feature type="helix" evidence="12">
    <location>
        <begin position="230"/>
        <end position="233"/>
    </location>
</feature>
<feature type="strand" evidence="12">
    <location>
        <begin position="238"/>
        <end position="240"/>
    </location>
</feature>
<feature type="helix" evidence="12">
    <location>
        <begin position="245"/>
        <end position="255"/>
    </location>
</feature>
<feature type="strand" evidence="12">
    <location>
        <begin position="258"/>
        <end position="262"/>
    </location>
</feature>
<feature type="helix" evidence="12">
    <location>
        <begin position="268"/>
        <end position="273"/>
    </location>
</feature>
<feature type="strand" evidence="12">
    <location>
        <begin position="276"/>
        <end position="278"/>
    </location>
</feature>
<feature type="helix" evidence="12">
    <location>
        <begin position="285"/>
        <end position="298"/>
    </location>
</feature>
<feature type="helix" evidence="12">
    <location>
        <begin position="304"/>
        <end position="310"/>
    </location>
</feature>
<feature type="helix" evidence="12">
    <location>
        <begin position="314"/>
        <end position="321"/>
    </location>
</feature>
<feature type="turn" evidence="12">
    <location>
        <begin position="322"/>
        <end position="326"/>
    </location>
</feature>
<feature type="helix" evidence="12">
    <location>
        <begin position="332"/>
        <end position="339"/>
    </location>
</feature>
<feature type="helix" evidence="12">
    <location>
        <begin position="343"/>
        <end position="355"/>
    </location>
</feature>
<feature type="strand" evidence="12">
    <location>
        <begin position="358"/>
        <end position="362"/>
    </location>
</feature>
<feature type="helix" evidence="12">
    <location>
        <begin position="365"/>
        <end position="367"/>
    </location>
</feature>
<feature type="turn" evidence="12">
    <location>
        <begin position="370"/>
        <end position="372"/>
    </location>
</feature>
<feature type="helix" evidence="12">
    <location>
        <begin position="373"/>
        <end position="386"/>
    </location>
</feature>
<feature type="strand" evidence="12">
    <location>
        <begin position="395"/>
        <end position="398"/>
    </location>
</feature>
<feature type="turn" evidence="12">
    <location>
        <begin position="403"/>
        <end position="406"/>
    </location>
</feature>
<feature type="helix" evidence="12">
    <location>
        <begin position="422"/>
        <end position="424"/>
    </location>
</feature>
<feature type="helix" evidence="14">
    <location>
        <begin position="429"/>
        <end position="431"/>
    </location>
</feature>
<feature type="strand" evidence="12">
    <location>
        <begin position="432"/>
        <end position="434"/>
    </location>
</feature>
<feature type="strand" evidence="12">
    <location>
        <begin position="437"/>
        <end position="440"/>
    </location>
</feature>
<feature type="helix" evidence="12">
    <location>
        <begin position="441"/>
        <end position="443"/>
    </location>
</feature>
<feature type="helix" evidence="12">
    <location>
        <begin position="444"/>
        <end position="449"/>
    </location>
</feature>
<feature type="strand" evidence="12">
    <location>
        <begin position="454"/>
        <end position="457"/>
    </location>
</feature>
<feature type="strand" evidence="12">
    <location>
        <begin position="460"/>
        <end position="463"/>
    </location>
</feature>
<feature type="strand" evidence="12">
    <location>
        <begin position="469"/>
        <end position="474"/>
    </location>
</feature>
<feature type="helix" evidence="12">
    <location>
        <begin position="477"/>
        <end position="480"/>
    </location>
</feature>
<feature type="helix" evidence="12">
    <location>
        <begin position="484"/>
        <end position="490"/>
    </location>
</feature>
<feature type="helix" evidence="12">
    <location>
        <begin position="491"/>
        <end position="493"/>
    </location>
</feature>
<feature type="strand" evidence="12">
    <location>
        <begin position="495"/>
        <end position="503"/>
    </location>
</feature>
<feature type="helix" evidence="12">
    <location>
        <begin position="506"/>
        <end position="509"/>
    </location>
</feature>
<feature type="strand" evidence="12">
    <location>
        <begin position="512"/>
        <end position="517"/>
    </location>
</feature>
<feature type="helix" evidence="12">
    <location>
        <begin position="520"/>
        <end position="522"/>
    </location>
</feature>
<feature type="strand" evidence="12">
    <location>
        <begin position="525"/>
        <end position="529"/>
    </location>
</feature>
<feature type="turn" evidence="12">
    <location>
        <begin position="531"/>
        <end position="533"/>
    </location>
</feature>
<feature type="strand" evidence="12">
    <location>
        <begin position="536"/>
        <end position="540"/>
    </location>
</feature>
<feature type="helix" evidence="12">
    <location>
        <begin position="553"/>
        <end position="563"/>
    </location>
</feature>
<feature type="helix" evidence="12">
    <location>
        <begin position="567"/>
        <end position="571"/>
    </location>
</feature>
<feature type="helix" evidence="12">
    <location>
        <begin position="576"/>
        <end position="593"/>
    </location>
</feature>
<feature type="helix" evidence="12">
    <location>
        <begin position="601"/>
        <end position="607"/>
    </location>
</feature>
<feature type="strand" evidence="12">
    <location>
        <begin position="609"/>
        <end position="611"/>
    </location>
</feature>
<feature type="helix" evidence="12">
    <location>
        <begin position="617"/>
        <end position="619"/>
    </location>
</feature>
<feature type="helix" evidence="12">
    <location>
        <begin position="624"/>
        <end position="628"/>
    </location>
</feature>
<feature type="turn" evidence="12">
    <location>
        <begin position="630"/>
        <end position="632"/>
    </location>
</feature>
<feature type="strand" evidence="12">
    <location>
        <begin position="640"/>
        <end position="645"/>
    </location>
</feature>
<feature type="helix" evidence="12">
    <location>
        <begin position="647"/>
        <end position="652"/>
    </location>
</feature>
<feature type="strand" evidence="12">
    <location>
        <begin position="679"/>
        <end position="682"/>
    </location>
</feature>
<feature type="strand" evidence="12">
    <location>
        <begin position="687"/>
        <end position="690"/>
    </location>
</feature>
<feature type="turn" evidence="12">
    <location>
        <begin position="694"/>
        <end position="696"/>
    </location>
</feature>
<feature type="helix" evidence="12">
    <location>
        <begin position="698"/>
        <end position="702"/>
    </location>
</feature>
<feature type="strand" evidence="12">
    <location>
        <begin position="710"/>
        <end position="713"/>
    </location>
</feature>
<feature type="helix" evidence="12">
    <location>
        <begin position="715"/>
        <end position="720"/>
    </location>
</feature>
<feature type="strand" evidence="12">
    <location>
        <begin position="728"/>
        <end position="732"/>
    </location>
</feature>
<feature type="strand" evidence="12">
    <location>
        <begin position="737"/>
        <end position="744"/>
    </location>
</feature>
<feature type="strand" evidence="12">
    <location>
        <begin position="752"/>
        <end position="754"/>
    </location>
</feature>
<feature type="strand" evidence="12">
    <location>
        <begin position="773"/>
        <end position="775"/>
    </location>
</feature>
<feature type="helix" evidence="12">
    <location>
        <begin position="778"/>
        <end position="780"/>
    </location>
</feature>
<feature type="turn" evidence="12">
    <location>
        <begin position="789"/>
        <end position="791"/>
    </location>
</feature>
<feature type="strand" evidence="12">
    <location>
        <begin position="800"/>
        <end position="805"/>
    </location>
</feature>
<feature type="strand" evidence="13">
    <location>
        <begin position="815"/>
        <end position="817"/>
    </location>
</feature>
<feature type="helix" evidence="12">
    <location>
        <begin position="820"/>
        <end position="822"/>
    </location>
</feature>
<sequence>MTKFSGNELRAELYRRAFLSYSVAPGALGMFGRSLLAKGARAEALANGTVMSGSHWGVFTATVENGRATAFTPWEKDPHPTPMLEGVLDSIYSPTRIKYPMVRREFLEKGVNADRSTRGNGDFVRVSWDQALDLVAAEVKRVEETYGPQGVFGGSYGWKSPGRLHNCTTLLRRMLTLAGGYVNGAGDYSTGAAQVIMPHVVGTLEVYEQQTAWPVLAENTEVMVFWAADPIKTSQIGWVIPEHGAYPGLEALKAKGTKVIVIDPVRTKTVEFFGADHVTPKPQTDVAIMLGMAHTLVAEDLYDKDFIANYTSGFDKFLPYLMGETDSTPKTAEWASDISGVPAETIKELARLFISKRTMLAAGWSMQRMHHGEQAHWMLVTLASMLGQIGLPGGGFGLSYHYSGGGTPSTSGPALSGITDGGAATKGPEWLAASGASVIPVARVVDMLENPGAEFDFNGTRSKFPDVKMAYWVGGNPFVHHQDRNRMVKAWEKLETFIVHDFQWTPTARHADIVLPATTSYERNDIETIGDYSNTGILAMKKIVEPLYEARSDYDIFAAVAERLGKGKEFTEGKDEMGWIKSFYDDAAKQGKAGGVEMPAFDAFWAEGIVEFPVTDGADFVRYASFREDPLLNPLGTPTGLIEIYSKNIEKMGYDDCPAHPTWMEPLERLDGPGAKYPLHIAASHPFNRLHSQLNGTVLREGYAVQGHEPCLMHPDDAAARGIADGDVVRVHNDRGQILTGVKVTDAVMKGVIQIYEGGWYDPSDVTEPGTLDKYGDVNVLSADIGTSKLAQGNCGQTVLAEVEKYTGPAVTLTGFVAPKAAE</sequence>
<comment type="function">
    <text evidence="5 6">Catalyzes the reduction of dimethyl sulfoxide (DMSO) and trimethylamine N-oxide (TMAO) to dimethyl sulfide (DMS) and trimethylamine, respectively. The terminal DMSO reductase can also use various sulfoxides and N-oxide compounds as terminal electron acceptor in addition to DMSO and TMAO.</text>
</comment>
<comment type="catalytic activity">
    <reaction>
        <text>dimethyl sulfide + a menaquinone + H2O = dimethyl sulfoxide + a menaquinol</text>
        <dbReference type="Rhea" id="RHEA:28494"/>
        <dbReference type="Rhea" id="RHEA-COMP:9537"/>
        <dbReference type="Rhea" id="RHEA-COMP:9539"/>
        <dbReference type="ChEBI" id="CHEBI:15377"/>
        <dbReference type="ChEBI" id="CHEBI:16374"/>
        <dbReference type="ChEBI" id="CHEBI:17437"/>
        <dbReference type="ChEBI" id="CHEBI:18151"/>
        <dbReference type="ChEBI" id="CHEBI:28262"/>
        <dbReference type="EC" id="1.8.5.3"/>
    </reaction>
</comment>
<comment type="catalytic activity">
    <reaction>
        <text>trimethylamine + 2 Fe(III)-[cytochrome c] + H2O = trimethylamine N-oxide + 2 Fe(II)-[cytochrome c] + 3 H(+)</text>
        <dbReference type="Rhea" id="RHEA:24236"/>
        <dbReference type="Rhea" id="RHEA-COMP:10350"/>
        <dbReference type="Rhea" id="RHEA-COMP:14399"/>
        <dbReference type="ChEBI" id="CHEBI:15377"/>
        <dbReference type="ChEBI" id="CHEBI:15378"/>
        <dbReference type="ChEBI" id="CHEBI:15724"/>
        <dbReference type="ChEBI" id="CHEBI:29033"/>
        <dbReference type="ChEBI" id="CHEBI:29034"/>
        <dbReference type="ChEBI" id="CHEBI:58389"/>
        <dbReference type="EC" id="1.7.2.3"/>
    </reaction>
</comment>
<comment type="cofactor">
    <cofactor evidence="5 8">
        <name>Mo-bis(molybdopterin guanine dinucleotide)</name>
        <dbReference type="ChEBI" id="CHEBI:60539"/>
    </cofactor>
    <text evidence="5 8">Binds 1 molybdenum-bis(molybdopterin guanine dinucleotide) (Mo-bis-MGD) cofactor per subunit.</text>
</comment>
<comment type="subunit">
    <text evidence="2 3 4 5 6 8 9 10">Homodimer.</text>
</comment>
<comment type="subcellular location">
    <subcellularLocation>
        <location evidence="6">Periplasm</location>
    </subcellularLocation>
</comment>
<comment type="PTM">
    <text>Predicted to be exported by the Tat system. The position of the signal peptide cleavage has been experimentally proven.</text>
</comment>
<comment type="mass spectrometry"/>
<comment type="mass spectrometry"/>
<comment type="similarity">
    <text evidence="11">Belongs to the prokaryotic molybdopterin-containing oxidoreductase family.</text>
</comment>
<comment type="sequence caution" evidence="11">
    <conflict type="erroneous initiation">
        <sequence resource="EMBL-CDS" id="CAA64689"/>
    </conflict>
</comment>